<protein>
    <recommendedName>
        <fullName evidence="1">UPF0301 protein Tfu_2389</fullName>
    </recommendedName>
</protein>
<evidence type="ECO:0000255" key="1">
    <source>
        <dbReference type="HAMAP-Rule" id="MF_00758"/>
    </source>
</evidence>
<sequence length="198" mass="21293">MEAHMDRLSLTGALLVATPLLEDPNFYRSVVFVIDDTPDEGTLGVILNRPSELGVGEVLAEWGEHVSQPAVMFAGGPVGQDAGLALAVPDDGQRPLGWKSLDAMDAKTWPNGLGTVDLDTPPQLVADALRQMRVFAGYAGWSAGQLRAEIDQGAWYVLPATVDDVFCADPRGLWSRVLRRQGGELAFVATFPHDPTLN</sequence>
<name>Y2389_THEFY</name>
<organism>
    <name type="scientific">Thermobifida fusca (strain YX)</name>
    <dbReference type="NCBI Taxonomy" id="269800"/>
    <lineage>
        <taxon>Bacteria</taxon>
        <taxon>Bacillati</taxon>
        <taxon>Actinomycetota</taxon>
        <taxon>Actinomycetes</taxon>
        <taxon>Streptosporangiales</taxon>
        <taxon>Nocardiopsidaceae</taxon>
        <taxon>Thermobifida</taxon>
    </lineage>
</organism>
<dbReference type="EMBL" id="CP000088">
    <property type="protein sequence ID" value="AAZ56422.1"/>
    <property type="molecule type" value="Genomic_DNA"/>
</dbReference>
<dbReference type="SMR" id="Q47MA0"/>
<dbReference type="STRING" id="269800.Tfu_2389"/>
<dbReference type="KEGG" id="tfu:Tfu_2389"/>
<dbReference type="eggNOG" id="COG1678">
    <property type="taxonomic scope" value="Bacteria"/>
</dbReference>
<dbReference type="HOGENOM" id="CLU_057596_2_0_11"/>
<dbReference type="GO" id="GO:0005829">
    <property type="term" value="C:cytosol"/>
    <property type="evidence" value="ECO:0007669"/>
    <property type="project" value="TreeGrafter"/>
</dbReference>
<dbReference type="Gene3D" id="3.40.1740.10">
    <property type="entry name" value="VC0467-like"/>
    <property type="match status" value="1"/>
</dbReference>
<dbReference type="HAMAP" id="MF_00758">
    <property type="entry name" value="UPF0301"/>
    <property type="match status" value="1"/>
</dbReference>
<dbReference type="InterPro" id="IPR003774">
    <property type="entry name" value="AlgH-like"/>
</dbReference>
<dbReference type="NCBIfam" id="NF001270">
    <property type="entry name" value="PRK00228.2-2"/>
    <property type="match status" value="1"/>
</dbReference>
<dbReference type="PANTHER" id="PTHR30327">
    <property type="entry name" value="UNCHARACTERIZED PROTEIN YQGE"/>
    <property type="match status" value="1"/>
</dbReference>
<dbReference type="PANTHER" id="PTHR30327:SF1">
    <property type="entry name" value="UPF0301 PROTEIN YQGE"/>
    <property type="match status" value="1"/>
</dbReference>
<dbReference type="Pfam" id="PF02622">
    <property type="entry name" value="DUF179"/>
    <property type="match status" value="1"/>
</dbReference>
<dbReference type="SUPFAM" id="SSF143456">
    <property type="entry name" value="VC0467-like"/>
    <property type="match status" value="1"/>
</dbReference>
<feature type="chain" id="PRO_0000258887" description="UPF0301 protein Tfu_2389">
    <location>
        <begin position="1"/>
        <end position="198"/>
    </location>
</feature>
<reference key="1">
    <citation type="journal article" date="2007" name="J. Bacteriol.">
        <title>Genome sequence and analysis of the soil cellulolytic actinomycete Thermobifida fusca YX.</title>
        <authorList>
            <person name="Lykidis A."/>
            <person name="Mavromatis K."/>
            <person name="Ivanova N."/>
            <person name="Anderson I."/>
            <person name="Land M."/>
            <person name="DiBartolo G."/>
            <person name="Martinez M."/>
            <person name="Lapidus A."/>
            <person name="Lucas S."/>
            <person name="Copeland A."/>
            <person name="Richardson P."/>
            <person name="Wilson D.B."/>
            <person name="Kyrpides N."/>
        </authorList>
    </citation>
    <scope>NUCLEOTIDE SEQUENCE [LARGE SCALE GENOMIC DNA]</scope>
    <source>
        <strain>YX</strain>
    </source>
</reference>
<comment type="similarity">
    <text evidence="1">Belongs to the UPF0301 (AlgH) family.</text>
</comment>
<accession>Q47MA0</accession>
<gene>
    <name type="ordered locus">Tfu_2389</name>
</gene>
<proteinExistence type="inferred from homology"/>